<name>RFC3_BOVIN</name>
<keyword id="KW-0007">Acetylation</keyword>
<keyword id="KW-0235">DNA replication</keyword>
<keyword id="KW-0238">DNA-binding</keyword>
<keyword id="KW-0539">Nucleus</keyword>
<keyword id="KW-0597">Phosphoprotein</keyword>
<keyword id="KW-1185">Reference proteome</keyword>
<feature type="chain" id="PRO_0000239457" description="Replication factor C subunit 3">
    <location>
        <begin position="1"/>
        <end position="356"/>
    </location>
</feature>
<feature type="modified residue" description="N6-acetyllysine" evidence="1">
    <location>
        <position position="20"/>
    </location>
</feature>
<feature type="modified residue" description="Phosphoserine" evidence="1">
    <location>
        <position position="125"/>
    </location>
</feature>
<proteinExistence type="evidence at transcript level"/>
<reference key="1">
    <citation type="submission" date="2005-11" db="EMBL/GenBank/DDBJ databases">
        <authorList>
            <consortium name="NIH - Mammalian Gene Collection (MGC) project"/>
        </authorList>
    </citation>
    <scope>NUCLEOTIDE SEQUENCE [LARGE SCALE MRNA]</scope>
    <source>
        <strain>Crossbred X Angus</strain>
        <tissue>Liver</tissue>
    </source>
</reference>
<comment type="function">
    <text evidence="1">Subunit of the replication factor C (RFC) complex which acts during elongation of primed DNA templates by DNA polymerases delta and epsilon, and is necessary for ATP-dependent loading of proliferating cell nuclear antigen (PCNA) onto primed DNA.</text>
</comment>
<comment type="subunit">
    <text evidence="1 2">Subunit of the RFC complex, an heteropentameric complex consisting of a large subunit RFC1 and four small subunits RFC2, RFC3, RFC4 and RFC5; the RFC complex interacts with PCNA. Forms an heterotetrameric complex with RFC2, RFC4 and RFC5; this complex has ATPase activity but is not stimulated by PCNA. The heterotetramer of subunits RFC2, RFC3, RFC4 and RFC5 interacts with RAD17 (By similarity). Interacts with CNTD1; this interaction facilitates crossover formation (By similarity).</text>
</comment>
<comment type="subcellular location">
    <subcellularLocation>
        <location evidence="3">Nucleus</location>
    </subcellularLocation>
</comment>
<comment type="similarity">
    <text evidence="3">Belongs to the activator 1 small subunits family.</text>
</comment>
<dbReference type="EMBL" id="BC109606">
    <property type="protein sequence ID" value="AAI09607.1"/>
    <property type="molecule type" value="mRNA"/>
</dbReference>
<dbReference type="RefSeq" id="NP_001033636.1">
    <property type="nucleotide sequence ID" value="NM_001038547.2"/>
</dbReference>
<dbReference type="SMR" id="Q2TBV1"/>
<dbReference type="CORUM" id="Q2TBV1"/>
<dbReference type="FunCoup" id="Q2TBV1">
    <property type="interactions" value="2961"/>
</dbReference>
<dbReference type="STRING" id="9913.ENSBTAP00000014278"/>
<dbReference type="PaxDb" id="9913-ENSBTAP00000014278"/>
<dbReference type="Ensembl" id="ENSBTAT00000014278.5">
    <property type="protein sequence ID" value="ENSBTAP00000014278.3"/>
    <property type="gene ID" value="ENSBTAG00000010787.5"/>
</dbReference>
<dbReference type="GeneID" id="515602"/>
<dbReference type="KEGG" id="bta:515602"/>
<dbReference type="CTD" id="5983"/>
<dbReference type="VEuPathDB" id="HostDB:ENSBTAG00000010787"/>
<dbReference type="VGNC" id="VGNC:33887">
    <property type="gene designation" value="RFC3"/>
</dbReference>
<dbReference type="eggNOG" id="KOG2035">
    <property type="taxonomic scope" value="Eukaryota"/>
</dbReference>
<dbReference type="GeneTree" id="ENSGT00550000075006"/>
<dbReference type="HOGENOM" id="CLU_042324_5_0_1"/>
<dbReference type="InParanoid" id="Q2TBV1"/>
<dbReference type="OMA" id="LKADIMH"/>
<dbReference type="OrthoDB" id="761538at2759"/>
<dbReference type="TreeFam" id="TF105724"/>
<dbReference type="Reactome" id="R-BTA-110312">
    <property type="pathway name" value="Translesion synthesis by REV1"/>
</dbReference>
<dbReference type="Reactome" id="R-BTA-110314">
    <property type="pathway name" value="Recognition of DNA damage by PCNA-containing replication complex"/>
</dbReference>
<dbReference type="Reactome" id="R-BTA-110320">
    <property type="pathway name" value="Translesion Synthesis by POLH"/>
</dbReference>
<dbReference type="Reactome" id="R-BTA-174411">
    <property type="pathway name" value="Polymerase switching on the C-strand of the telomere"/>
</dbReference>
<dbReference type="Reactome" id="R-BTA-176187">
    <property type="pathway name" value="Activation of ATR in response to replication stress"/>
</dbReference>
<dbReference type="Reactome" id="R-BTA-5651801">
    <property type="pathway name" value="PCNA-Dependent Long Patch Base Excision Repair"/>
</dbReference>
<dbReference type="Reactome" id="R-BTA-5655862">
    <property type="pathway name" value="Translesion synthesis by POLK"/>
</dbReference>
<dbReference type="Reactome" id="R-BTA-5656121">
    <property type="pathway name" value="Translesion synthesis by POLI"/>
</dbReference>
<dbReference type="Reactome" id="R-BTA-5656169">
    <property type="pathway name" value="Termination of translesion DNA synthesis"/>
</dbReference>
<dbReference type="Reactome" id="R-BTA-5685938">
    <property type="pathway name" value="HDR through Single Strand Annealing (SSA)"/>
</dbReference>
<dbReference type="Reactome" id="R-BTA-5685942">
    <property type="pathway name" value="HDR through Homologous Recombination (HRR)"/>
</dbReference>
<dbReference type="Reactome" id="R-BTA-5693607">
    <property type="pathway name" value="Processing of DNA double-strand break ends"/>
</dbReference>
<dbReference type="Reactome" id="R-BTA-5696397">
    <property type="pathway name" value="Gap-filling DNA repair synthesis and ligation in GG-NER"/>
</dbReference>
<dbReference type="Reactome" id="R-BTA-5696400">
    <property type="pathway name" value="Dual Incision in GG-NER"/>
</dbReference>
<dbReference type="Reactome" id="R-BTA-6782135">
    <property type="pathway name" value="Dual incision in TC-NER"/>
</dbReference>
<dbReference type="Reactome" id="R-BTA-6782210">
    <property type="pathway name" value="Gap-filling DNA repair synthesis and ligation in TC-NER"/>
</dbReference>
<dbReference type="Reactome" id="R-BTA-6804756">
    <property type="pathway name" value="Regulation of TP53 Activity through Phosphorylation"/>
</dbReference>
<dbReference type="Reactome" id="R-BTA-69091">
    <property type="pathway name" value="Polymerase switching"/>
</dbReference>
<dbReference type="Reactome" id="R-BTA-69473">
    <property type="pathway name" value="G2/M DNA damage checkpoint"/>
</dbReference>
<dbReference type="Proteomes" id="UP000009136">
    <property type="component" value="Chromosome 12"/>
</dbReference>
<dbReference type="Bgee" id="ENSBTAG00000010787">
    <property type="expression patterns" value="Expressed in oocyte and 109 other cell types or tissues"/>
</dbReference>
<dbReference type="GO" id="GO:0031390">
    <property type="term" value="C:Ctf18 RFC-like complex"/>
    <property type="evidence" value="ECO:0000250"/>
    <property type="project" value="UniProtKB"/>
</dbReference>
<dbReference type="GO" id="GO:0005663">
    <property type="term" value="C:DNA replication factor C complex"/>
    <property type="evidence" value="ECO:0000318"/>
    <property type="project" value="GO_Central"/>
</dbReference>
<dbReference type="GO" id="GO:0005634">
    <property type="term" value="C:nucleus"/>
    <property type="evidence" value="ECO:0000318"/>
    <property type="project" value="GO_Central"/>
</dbReference>
<dbReference type="GO" id="GO:0016887">
    <property type="term" value="F:ATP hydrolysis activity"/>
    <property type="evidence" value="ECO:0007669"/>
    <property type="project" value="InterPro"/>
</dbReference>
<dbReference type="GO" id="GO:0003677">
    <property type="term" value="F:DNA binding"/>
    <property type="evidence" value="ECO:0007669"/>
    <property type="project" value="UniProtKB-KW"/>
</dbReference>
<dbReference type="GO" id="GO:0006281">
    <property type="term" value="P:DNA repair"/>
    <property type="evidence" value="ECO:0000318"/>
    <property type="project" value="GO_Central"/>
</dbReference>
<dbReference type="GO" id="GO:0006261">
    <property type="term" value="P:DNA-templated DNA replication"/>
    <property type="evidence" value="ECO:0000318"/>
    <property type="project" value="GO_Central"/>
</dbReference>
<dbReference type="GO" id="GO:1900264">
    <property type="term" value="P:positive regulation of DNA-directed DNA polymerase activity"/>
    <property type="evidence" value="ECO:0000250"/>
    <property type="project" value="UniProtKB"/>
</dbReference>
<dbReference type="CDD" id="cd00009">
    <property type="entry name" value="AAA"/>
    <property type="match status" value="1"/>
</dbReference>
<dbReference type="FunFam" id="1.20.272.10:FF:000002">
    <property type="entry name" value="Replication factor C subunit 3"/>
    <property type="match status" value="1"/>
</dbReference>
<dbReference type="FunFam" id="1.10.8.60:FF:000030">
    <property type="entry name" value="replication factor C subunit 3"/>
    <property type="match status" value="1"/>
</dbReference>
<dbReference type="FunFam" id="3.40.50.300:FF:000136">
    <property type="entry name" value="Replication factor C subunit 5"/>
    <property type="match status" value="1"/>
</dbReference>
<dbReference type="Gene3D" id="1.10.8.60">
    <property type="match status" value="1"/>
</dbReference>
<dbReference type="Gene3D" id="1.20.272.10">
    <property type="match status" value="1"/>
</dbReference>
<dbReference type="Gene3D" id="3.40.50.300">
    <property type="entry name" value="P-loop containing nucleotide triphosphate hydrolases"/>
    <property type="match status" value="1"/>
</dbReference>
<dbReference type="InterPro" id="IPR003593">
    <property type="entry name" value="AAA+_ATPase"/>
</dbReference>
<dbReference type="InterPro" id="IPR008921">
    <property type="entry name" value="DNA_pol3_clamp-load_cplx_C"/>
</dbReference>
<dbReference type="InterPro" id="IPR050238">
    <property type="entry name" value="DNA_Rep/Repair_Clamp_Loader"/>
</dbReference>
<dbReference type="InterPro" id="IPR027417">
    <property type="entry name" value="P-loop_NTPase"/>
</dbReference>
<dbReference type="PANTHER" id="PTHR11669">
    <property type="entry name" value="REPLICATION FACTOR C / DNA POLYMERASE III GAMMA-TAU SUBUNIT"/>
    <property type="match status" value="1"/>
</dbReference>
<dbReference type="PANTHER" id="PTHR11669:SF1">
    <property type="entry name" value="REPLICATION FACTOR C SUBUNIT 3"/>
    <property type="match status" value="1"/>
</dbReference>
<dbReference type="Pfam" id="PF13177">
    <property type="entry name" value="DNA_pol3_delta2"/>
    <property type="match status" value="1"/>
</dbReference>
<dbReference type="Pfam" id="PF21960">
    <property type="entry name" value="RCF1-5-like_lid"/>
    <property type="match status" value="1"/>
</dbReference>
<dbReference type="Pfam" id="PF22534">
    <property type="entry name" value="RFC_C"/>
    <property type="match status" value="1"/>
</dbReference>
<dbReference type="SMART" id="SM00382">
    <property type="entry name" value="AAA"/>
    <property type="match status" value="1"/>
</dbReference>
<dbReference type="SUPFAM" id="SSF52540">
    <property type="entry name" value="P-loop containing nucleoside triphosphate hydrolases"/>
    <property type="match status" value="1"/>
</dbReference>
<dbReference type="SUPFAM" id="SSF48019">
    <property type="entry name" value="post-AAA+ oligomerization domain-like"/>
    <property type="match status" value="1"/>
</dbReference>
<gene>
    <name type="primary">RFC3</name>
</gene>
<organism>
    <name type="scientific">Bos taurus</name>
    <name type="common">Bovine</name>
    <dbReference type="NCBI Taxonomy" id="9913"/>
    <lineage>
        <taxon>Eukaryota</taxon>
        <taxon>Metazoa</taxon>
        <taxon>Chordata</taxon>
        <taxon>Craniata</taxon>
        <taxon>Vertebrata</taxon>
        <taxon>Euteleostomi</taxon>
        <taxon>Mammalia</taxon>
        <taxon>Eutheria</taxon>
        <taxon>Laurasiatheria</taxon>
        <taxon>Artiodactyla</taxon>
        <taxon>Ruminantia</taxon>
        <taxon>Pecora</taxon>
        <taxon>Bovidae</taxon>
        <taxon>Bovinae</taxon>
        <taxon>Bos</taxon>
    </lineage>
</organism>
<accession>Q2TBV1</accession>
<evidence type="ECO:0000250" key="1">
    <source>
        <dbReference type="UniProtKB" id="P40938"/>
    </source>
</evidence>
<evidence type="ECO:0000250" key="2">
    <source>
        <dbReference type="UniProtKB" id="Q8R323"/>
    </source>
</evidence>
<evidence type="ECO:0000305" key="3"/>
<sequence length="356" mass="40465">MSLWVDKYRPCSLGQLDYHKEQAAQLRNLVQCGDFPHLLVYGPSGAGKKTRIMCILRELYGVGVEKLRIEHQTITTPSKKKIEISTIASNYHLEVNPSDAGNSDRVVIQEMLKTVAQSQQLETSSQKDFKVVLLTEVDKLTKDAQHALRRTMEKYMSTCRLILCCNSTSKVIPPIRSRCLAVRVPAPSIEDICHVLSTVCKKEGLNLPPQLAHRLAEKSCRNLRKALLMCEACRVQQYPFTADQEIPETDWEVYLRETANAIVSQQTPQRLLEVRGRLYELLTHCIPPEIIMKGLLSELLHNCDGQLKGEVAQMAAYYEHRLQLGSKAIYHLEAFVAKFMALYKKFMEDGLEGMIF</sequence>
<protein>
    <recommendedName>
        <fullName>Replication factor C subunit 3</fullName>
    </recommendedName>
    <alternativeName>
        <fullName>Activator 1 38 kDa subunit</fullName>
        <shortName>A1 38 kDa subunit</shortName>
    </alternativeName>
    <alternativeName>
        <fullName>Activator 1 subunit 3</fullName>
    </alternativeName>
    <alternativeName>
        <fullName>Replication factor C 38 kDa subunit</fullName>
        <shortName>RF-C 38 kDa subunit</shortName>
        <shortName>RFC38</shortName>
    </alternativeName>
</protein>